<keyword id="KW-0325">Glycoprotein</keyword>
<keyword id="KW-0378">Hydrolase</keyword>
<keyword id="KW-0472">Membrane</keyword>
<keyword id="KW-0479">Metal-binding</keyword>
<keyword id="KW-0482">Metalloprotease</keyword>
<keyword id="KW-0645">Protease</keyword>
<keyword id="KW-1185">Reference proteome</keyword>
<keyword id="KW-0735">Signal-anchor</keyword>
<keyword id="KW-0812">Transmembrane</keyword>
<keyword id="KW-1133">Transmembrane helix</keyword>
<keyword id="KW-0862">Zinc</keyword>
<feature type="chain" id="PRO_0000237639" description="Putative zinc metalloprotease TRE2">
    <location>
        <begin position="1"/>
        <end position="809"/>
    </location>
</feature>
<feature type="topological domain" description="Cytoplasmic" evidence="1">
    <location>
        <begin position="1"/>
        <end position="125"/>
    </location>
</feature>
<feature type="transmembrane region" description="Helical; Signal-anchor for type II membrane protein" evidence="1">
    <location>
        <begin position="126"/>
        <end position="146"/>
    </location>
</feature>
<feature type="topological domain" description="Extracellular" evidence="1">
    <location>
        <begin position="147"/>
        <end position="809"/>
    </location>
</feature>
<feature type="domain" description="PA">
    <location>
        <begin position="255"/>
        <end position="349"/>
    </location>
</feature>
<feature type="region of interest" description="Disordered" evidence="2">
    <location>
        <begin position="1"/>
        <end position="66"/>
    </location>
</feature>
<feature type="compositionally biased region" description="Polar residues" evidence="2">
    <location>
        <begin position="1"/>
        <end position="12"/>
    </location>
</feature>
<feature type="compositionally biased region" description="Polar residues" evidence="2">
    <location>
        <begin position="20"/>
        <end position="30"/>
    </location>
</feature>
<feature type="compositionally biased region" description="Low complexity" evidence="2">
    <location>
        <begin position="37"/>
        <end position="50"/>
    </location>
</feature>
<feature type="glycosylation site" description="N-linked (GlcNAc...) asparagine" evidence="1">
    <location>
        <position position="228"/>
    </location>
</feature>
<feature type="glycosylation site" description="N-linked (GlcNAc...) asparagine" evidence="1">
    <location>
        <position position="669"/>
    </location>
</feature>
<feature type="glycosylation site" description="N-linked (GlcNAc...) asparagine" evidence="1">
    <location>
        <position position="736"/>
    </location>
</feature>
<dbReference type="EC" id="3.-.-.-"/>
<dbReference type="EMBL" id="Z75164">
    <property type="protein sequence ID" value="CAA99478.1"/>
    <property type="molecule type" value="Genomic_DNA"/>
</dbReference>
<dbReference type="EMBL" id="BK006948">
    <property type="protein sequence ID" value="DAA11023.1"/>
    <property type="molecule type" value="Genomic_DNA"/>
</dbReference>
<dbReference type="PIR" id="S67153">
    <property type="entry name" value="S67153"/>
</dbReference>
<dbReference type="RefSeq" id="NP_014899.1">
    <property type="nucleotide sequence ID" value="NM_001183675.2"/>
</dbReference>
<dbReference type="SMR" id="Q08693"/>
<dbReference type="BioGRID" id="34646">
    <property type="interactions" value="25"/>
</dbReference>
<dbReference type="FunCoup" id="Q08693">
    <property type="interactions" value="36"/>
</dbReference>
<dbReference type="IntAct" id="Q08693">
    <property type="interactions" value="1"/>
</dbReference>
<dbReference type="STRING" id="4932.YOR256C"/>
<dbReference type="TCDB" id="9.B.229.1.7">
    <property type="family name" value="the transferrin receptor, cd71, (tfr) family"/>
</dbReference>
<dbReference type="GlyCosmos" id="Q08693">
    <property type="glycosylation" value="3 sites, No reported glycans"/>
</dbReference>
<dbReference type="GlyGen" id="Q08693">
    <property type="glycosylation" value="3 sites"/>
</dbReference>
<dbReference type="iPTMnet" id="Q08693"/>
<dbReference type="PaxDb" id="4932-YOR256C"/>
<dbReference type="PeptideAtlas" id="Q08693"/>
<dbReference type="TopDownProteomics" id="Q08693"/>
<dbReference type="EnsemblFungi" id="YOR256C_mRNA">
    <property type="protein sequence ID" value="YOR256C"/>
    <property type="gene ID" value="YOR256C"/>
</dbReference>
<dbReference type="GeneID" id="854430"/>
<dbReference type="KEGG" id="sce:YOR256C"/>
<dbReference type="AGR" id="SGD:S000005782"/>
<dbReference type="SGD" id="S000005782">
    <property type="gene designation" value="TRE2"/>
</dbReference>
<dbReference type="VEuPathDB" id="FungiDB:YOR256C"/>
<dbReference type="eggNOG" id="KOG2195">
    <property type="taxonomic scope" value="Eukaryota"/>
</dbReference>
<dbReference type="GeneTree" id="ENSGT01030000234598"/>
<dbReference type="HOGENOM" id="CLU_005688_1_1_1"/>
<dbReference type="InParanoid" id="Q08693"/>
<dbReference type="OMA" id="IGRRQCK"/>
<dbReference type="OrthoDB" id="5841748at2759"/>
<dbReference type="BioCyc" id="YEAST:G3O-33747-MONOMER"/>
<dbReference type="Reactome" id="R-SCE-8963693">
    <property type="pathway name" value="Aspartate and asparagine metabolism"/>
</dbReference>
<dbReference type="Reactome" id="R-SCE-8980692">
    <property type="pathway name" value="RHOA GTPase cycle"/>
</dbReference>
<dbReference type="Reactome" id="R-SCE-9013026">
    <property type="pathway name" value="RHOB GTPase cycle"/>
</dbReference>
<dbReference type="Reactome" id="R-SCE-9013106">
    <property type="pathway name" value="RHOC GTPase cycle"/>
</dbReference>
<dbReference type="Reactome" id="R-SCE-9013406">
    <property type="pathway name" value="RHOQ GTPase cycle"/>
</dbReference>
<dbReference type="Reactome" id="R-SCE-9696270">
    <property type="pathway name" value="RND2 GTPase cycle"/>
</dbReference>
<dbReference type="Reactome" id="R-SCE-9696273">
    <property type="pathway name" value="RND1 GTPase cycle"/>
</dbReference>
<dbReference type="BioGRID-ORCS" id="854430">
    <property type="hits" value="3 hits in 10 CRISPR screens"/>
</dbReference>
<dbReference type="PRO" id="PR:Q08693"/>
<dbReference type="Proteomes" id="UP000002311">
    <property type="component" value="Chromosome XV"/>
</dbReference>
<dbReference type="RNAct" id="Q08693">
    <property type="molecule type" value="protein"/>
</dbReference>
<dbReference type="GO" id="GO:0016020">
    <property type="term" value="C:membrane"/>
    <property type="evidence" value="ECO:0007669"/>
    <property type="project" value="UniProtKB-SubCell"/>
</dbReference>
<dbReference type="GO" id="GO:0004180">
    <property type="term" value="F:carboxypeptidase activity"/>
    <property type="evidence" value="ECO:0000318"/>
    <property type="project" value="GO_Central"/>
</dbReference>
<dbReference type="GO" id="GO:0046872">
    <property type="term" value="F:metal ion binding"/>
    <property type="evidence" value="ECO:0007669"/>
    <property type="project" value="UniProtKB-KW"/>
</dbReference>
<dbReference type="GO" id="GO:0008237">
    <property type="term" value="F:metallopeptidase activity"/>
    <property type="evidence" value="ECO:0007669"/>
    <property type="project" value="UniProtKB-KW"/>
</dbReference>
<dbReference type="GO" id="GO:0043328">
    <property type="term" value="P:protein transport to vacuole involved in ubiquitin-dependent protein catabolic process via the multivesicular body sorting pathway"/>
    <property type="evidence" value="ECO:0000316"/>
    <property type="project" value="SGD"/>
</dbReference>
<dbReference type="CDD" id="cd03874">
    <property type="entry name" value="M28_PMSA_TfR_like"/>
    <property type="match status" value="1"/>
</dbReference>
<dbReference type="CDD" id="cd00538">
    <property type="entry name" value="PA"/>
    <property type="match status" value="1"/>
</dbReference>
<dbReference type="Gene3D" id="3.50.30.30">
    <property type="match status" value="1"/>
</dbReference>
<dbReference type="Gene3D" id="1.20.930.40">
    <property type="entry name" value="Transferrin receptor-like, dimerisation domain"/>
    <property type="match status" value="1"/>
</dbReference>
<dbReference type="Gene3D" id="3.40.630.10">
    <property type="entry name" value="Zn peptidases"/>
    <property type="match status" value="1"/>
</dbReference>
<dbReference type="InterPro" id="IPR046450">
    <property type="entry name" value="PA_dom_sf"/>
</dbReference>
<dbReference type="InterPro" id="IPR007484">
    <property type="entry name" value="Peptidase_M28"/>
</dbReference>
<dbReference type="InterPro" id="IPR039373">
    <property type="entry name" value="Peptidase_M28B"/>
</dbReference>
<dbReference type="InterPro" id="IPR007365">
    <property type="entry name" value="TFR-like_dimer_dom"/>
</dbReference>
<dbReference type="InterPro" id="IPR036757">
    <property type="entry name" value="TFR-like_dimer_dom_sf"/>
</dbReference>
<dbReference type="PANTHER" id="PTHR10404">
    <property type="entry name" value="N-ACETYLATED-ALPHA-LINKED ACIDIC DIPEPTIDASE"/>
    <property type="match status" value="1"/>
</dbReference>
<dbReference type="PANTHER" id="PTHR10404:SF72">
    <property type="entry name" value="ZINC METALLOPROTEASE TRE2-RELATED"/>
    <property type="match status" value="1"/>
</dbReference>
<dbReference type="Pfam" id="PF04389">
    <property type="entry name" value="Peptidase_M28"/>
    <property type="match status" value="1"/>
</dbReference>
<dbReference type="Pfam" id="PF04253">
    <property type="entry name" value="TFR_dimer"/>
    <property type="match status" value="1"/>
</dbReference>
<dbReference type="SUPFAM" id="SSF52025">
    <property type="entry name" value="PA domain"/>
    <property type="match status" value="1"/>
</dbReference>
<dbReference type="SUPFAM" id="SSF47672">
    <property type="entry name" value="Transferrin receptor-like dimerisation domain"/>
    <property type="match status" value="1"/>
</dbReference>
<dbReference type="SUPFAM" id="SSF53187">
    <property type="entry name" value="Zn-dependent exopeptidases"/>
    <property type="match status" value="1"/>
</dbReference>
<name>TRE2_YEAST</name>
<sequence>MRSSYQPVSTTNFEHENAIPTASSSHNLLMSQRFDDSPPSSNDNSIETNITPPPEPPSYEFDIEDPHDDLHKRTHLQRVSIGFQEKILEPLMENIIHPLLQISKFVPDKADYYLSKIGNPFILRRFFYIIFMSFIAYYVLSSGYLFNEKASGSKGMFSQHDILFEYAKKSVDLAKFERDLEYISSMPHGSGTKGDAAIYRYIQESFDNNGLKLVKEMGYSVYSNYPGNVSISYYDNKNEKHDLELSKENFNPLSSNGKLSKVSLIYGGKGTTYDLQHLKDSKTIEDGKDYVLLLQYDKLVSQQVLIAEKFGAKAVIFISEPYGENIDVVQSKPVGLPQYSTGDASGLNWDGSPVEEKDHKFWRQTHIPTIPISTRQGKELLSRLSSGGVTVDDGNSDRSNSGKMGDVLIDVDLQTNVREKHFIPNIVGKIEGREQSDKAIIIAASRNSINFGTTYPNFGTAALLSIVQLFQEVKYKFGWKPLRNIYFISFGGTEFNYAGSSELVEQRLTPLKDEIYSLIDISQLGIPFAEKYENGKTRGELSIETHPLLKKFFNRNAHGNFDISVDNVQHYGDWTPFLANGIPVSVISSDSTRNRDTPTETSEDKFERVEKILEDEQNQQSVKDLLVYLLHISMELIDDPLLHFDIISYVEDIDERLQRLEQAYPEKLNFTSIIKGLLFWKKIGSEWASWTQGWENIVWSHGDGIEPSLLSINRWTWNKKLTNIGRRTCSPAGLPNRSFYKNVLFGPTLIQEDKSKNGGNVDFWTFPGVMDAIYDDDWKRAQEQIDLIGKVLHQSAALFVEETNDIGYK</sequence>
<proteinExistence type="evidence at protein level"/>
<accession>Q08693</accession>
<accession>D6W2V7</accession>
<gene>
    <name type="primary">TRE2</name>
    <name type="ordered locus">YOR256C</name>
</gene>
<evidence type="ECO:0000255" key="1"/>
<evidence type="ECO:0000256" key="2">
    <source>
        <dbReference type="SAM" id="MobiDB-lite"/>
    </source>
</evidence>
<evidence type="ECO:0000269" key="3">
    <source>
    </source>
</evidence>
<evidence type="ECO:0000305" key="4"/>
<protein>
    <recommendedName>
        <fullName>Putative zinc metalloprotease TRE2</fullName>
        <ecNumber>3.-.-.-</ecNumber>
    </recommendedName>
    <alternativeName>
        <fullName>Transferrin receptor-like protein 2</fullName>
    </alternativeName>
</protein>
<comment type="subcellular location">
    <subcellularLocation>
        <location evidence="4">Membrane</location>
        <topology evidence="4">Single-pass type II membrane protein</topology>
    </subcellularLocation>
</comment>
<comment type="miscellaneous">
    <text evidence="3">Present with 300 molecules/cell in log phase SD medium.</text>
</comment>
<comment type="similarity">
    <text evidence="4">Belongs to the peptidase M28 family. M28B subfamily.</text>
</comment>
<organism>
    <name type="scientific">Saccharomyces cerevisiae (strain ATCC 204508 / S288c)</name>
    <name type="common">Baker's yeast</name>
    <dbReference type="NCBI Taxonomy" id="559292"/>
    <lineage>
        <taxon>Eukaryota</taxon>
        <taxon>Fungi</taxon>
        <taxon>Dikarya</taxon>
        <taxon>Ascomycota</taxon>
        <taxon>Saccharomycotina</taxon>
        <taxon>Saccharomycetes</taxon>
        <taxon>Saccharomycetales</taxon>
        <taxon>Saccharomycetaceae</taxon>
        <taxon>Saccharomyces</taxon>
    </lineage>
</organism>
<reference key="1">
    <citation type="journal article" date="1997" name="Yeast">
        <title>Sequencing analysis of a 36.8 kb fragment of yeast chromosome XV reveals 26 open reading frames including SEC63, CDC31, SUG2, GCD1, RBL2, PNT1, PAC1 and VPH1.</title>
        <authorList>
            <person name="Poirey R."/>
            <person name="Jauniaux J.-C."/>
        </authorList>
    </citation>
    <scope>NUCLEOTIDE SEQUENCE [GENOMIC DNA]</scope>
    <source>
        <strain>ATCC 96604 / S288c / FY1679</strain>
    </source>
</reference>
<reference key="2">
    <citation type="journal article" date="1997" name="Nature">
        <title>The nucleotide sequence of Saccharomyces cerevisiae chromosome XV.</title>
        <authorList>
            <person name="Dujon B."/>
            <person name="Albermann K."/>
            <person name="Aldea M."/>
            <person name="Alexandraki D."/>
            <person name="Ansorge W."/>
            <person name="Arino J."/>
            <person name="Benes V."/>
            <person name="Bohn C."/>
            <person name="Bolotin-Fukuhara M."/>
            <person name="Bordonne R."/>
            <person name="Boyer J."/>
            <person name="Camasses A."/>
            <person name="Casamayor A."/>
            <person name="Casas C."/>
            <person name="Cheret G."/>
            <person name="Cziepluch C."/>
            <person name="Daignan-Fornier B."/>
            <person name="Dang V.-D."/>
            <person name="de Haan M."/>
            <person name="Delius H."/>
            <person name="Durand P."/>
            <person name="Fairhead C."/>
            <person name="Feldmann H."/>
            <person name="Gaillon L."/>
            <person name="Galisson F."/>
            <person name="Gamo F.-J."/>
            <person name="Gancedo C."/>
            <person name="Goffeau A."/>
            <person name="Goulding S.E."/>
            <person name="Grivell L.A."/>
            <person name="Habbig B."/>
            <person name="Hand N.J."/>
            <person name="Hani J."/>
            <person name="Hattenhorst U."/>
            <person name="Hebling U."/>
            <person name="Hernando Y."/>
            <person name="Herrero E."/>
            <person name="Heumann K."/>
            <person name="Hiesel R."/>
            <person name="Hilger F."/>
            <person name="Hofmann B."/>
            <person name="Hollenberg C.P."/>
            <person name="Hughes B."/>
            <person name="Jauniaux J.-C."/>
            <person name="Kalogeropoulos A."/>
            <person name="Katsoulou C."/>
            <person name="Kordes E."/>
            <person name="Lafuente M.J."/>
            <person name="Landt O."/>
            <person name="Louis E.J."/>
            <person name="Maarse A.C."/>
            <person name="Madania A."/>
            <person name="Mannhaupt G."/>
            <person name="Marck C."/>
            <person name="Martin R.P."/>
            <person name="Mewes H.-W."/>
            <person name="Michaux G."/>
            <person name="Paces V."/>
            <person name="Parle-McDermott A.G."/>
            <person name="Pearson B.M."/>
            <person name="Perrin A."/>
            <person name="Pettersson B."/>
            <person name="Poch O."/>
            <person name="Pohl T.M."/>
            <person name="Poirey R."/>
            <person name="Portetelle D."/>
            <person name="Pujol A."/>
            <person name="Purnelle B."/>
            <person name="Ramezani Rad M."/>
            <person name="Rechmann S."/>
            <person name="Schwager C."/>
            <person name="Schweizer M."/>
            <person name="Sor F."/>
            <person name="Sterky F."/>
            <person name="Tarassov I.A."/>
            <person name="Teodoru C."/>
            <person name="Tettelin H."/>
            <person name="Thierry A."/>
            <person name="Tobiasch E."/>
            <person name="Tzermia M."/>
            <person name="Uhlen M."/>
            <person name="Unseld M."/>
            <person name="Valens M."/>
            <person name="Vandenbol M."/>
            <person name="Vetter I."/>
            <person name="Vlcek C."/>
            <person name="Voet M."/>
            <person name="Volckaert G."/>
            <person name="Voss H."/>
            <person name="Wambutt R."/>
            <person name="Wedler H."/>
            <person name="Wiemann S."/>
            <person name="Winsor B."/>
            <person name="Wolfe K.H."/>
            <person name="Zollner A."/>
            <person name="Zumstein E."/>
            <person name="Kleine K."/>
        </authorList>
    </citation>
    <scope>NUCLEOTIDE SEQUENCE [LARGE SCALE GENOMIC DNA]</scope>
    <source>
        <strain>ATCC 204508 / S288c</strain>
    </source>
</reference>
<reference key="3">
    <citation type="journal article" date="2014" name="G3 (Bethesda)">
        <title>The reference genome sequence of Saccharomyces cerevisiae: Then and now.</title>
        <authorList>
            <person name="Engel S.R."/>
            <person name="Dietrich F.S."/>
            <person name="Fisk D.G."/>
            <person name="Binkley G."/>
            <person name="Balakrishnan R."/>
            <person name="Costanzo M.C."/>
            <person name="Dwight S.S."/>
            <person name="Hitz B.C."/>
            <person name="Karra K."/>
            <person name="Nash R.S."/>
            <person name="Weng S."/>
            <person name="Wong E.D."/>
            <person name="Lloyd P."/>
            <person name="Skrzypek M.S."/>
            <person name="Miyasato S.R."/>
            <person name="Simison M."/>
            <person name="Cherry J.M."/>
        </authorList>
    </citation>
    <scope>GENOME REANNOTATION</scope>
    <source>
        <strain>ATCC 204508 / S288c</strain>
    </source>
</reference>
<reference key="4">
    <citation type="journal article" date="2003" name="Nature">
        <title>Global analysis of protein localization in budding yeast.</title>
        <authorList>
            <person name="Huh W.-K."/>
            <person name="Falvo J.V."/>
            <person name="Gerke L.C."/>
            <person name="Carroll A.S."/>
            <person name="Howson R.W."/>
            <person name="Weissman J.S."/>
            <person name="O'Shea E.K."/>
        </authorList>
    </citation>
    <scope>SUBCELLULAR LOCATION [LARGE SCALE ANALYSIS]</scope>
</reference>
<reference key="5">
    <citation type="journal article" date="2003" name="Nature">
        <title>Global analysis of protein expression in yeast.</title>
        <authorList>
            <person name="Ghaemmaghami S."/>
            <person name="Huh W.-K."/>
            <person name="Bower K."/>
            <person name="Howson R.W."/>
            <person name="Belle A."/>
            <person name="Dephoure N."/>
            <person name="O'Shea E.K."/>
            <person name="Weissman J.S."/>
        </authorList>
    </citation>
    <scope>LEVEL OF PROTEIN EXPRESSION [LARGE SCALE ANALYSIS]</scope>
</reference>